<protein>
    <recommendedName>
        <fullName evidence="1">Alanine--tRNA ligase</fullName>
        <ecNumber evidence="1">6.1.1.7</ecNumber>
    </recommendedName>
    <alternativeName>
        <fullName evidence="1">Alanyl-tRNA synthetase</fullName>
        <shortName evidence="1">AlaRS</shortName>
    </alternativeName>
</protein>
<feature type="chain" id="PRO_0000347627" description="Alanine--tRNA ligase">
    <location>
        <begin position="1"/>
        <end position="874"/>
    </location>
</feature>
<feature type="binding site" evidence="1">
    <location>
        <position position="563"/>
    </location>
    <ligand>
        <name>Zn(2+)</name>
        <dbReference type="ChEBI" id="CHEBI:29105"/>
    </ligand>
</feature>
<feature type="binding site" evidence="1">
    <location>
        <position position="567"/>
    </location>
    <ligand>
        <name>Zn(2+)</name>
        <dbReference type="ChEBI" id="CHEBI:29105"/>
    </ligand>
</feature>
<feature type="binding site" evidence="1">
    <location>
        <position position="665"/>
    </location>
    <ligand>
        <name>Zn(2+)</name>
        <dbReference type="ChEBI" id="CHEBI:29105"/>
    </ligand>
</feature>
<feature type="binding site" evidence="1">
    <location>
        <position position="669"/>
    </location>
    <ligand>
        <name>Zn(2+)</name>
        <dbReference type="ChEBI" id="CHEBI:29105"/>
    </ligand>
</feature>
<organism>
    <name type="scientific">Histophilus somni (strain 129Pt)</name>
    <name type="common">Haemophilus somnus</name>
    <dbReference type="NCBI Taxonomy" id="205914"/>
    <lineage>
        <taxon>Bacteria</taxon>
        <taxon>Pseudomonadati</taxon>
        <taxon>Pseudomonadota</taxon>
        <taxon>Gammaproteobacteria</taxon>
        <taxon>Pasteurellales</taxon>
        <taxon>Pasteurellaceae</taxon>
        <taxon>Histophilus</taxon>
    </lineage>
</organism>
<comment type="function">
    <text evidence="1">Catalyzes the attachment of alanine to tRNA(Ala) in a two-step reaction: alanine is first activated by ATP to form Ala-AMP and then transferred to the acceptor end of tRNA(Ala). Also edits incorrectly charged Ser-tRNA(Ala) and Gly-tRNA(Ala) via its editing domain.</text>
</comment>
<comment type="catalytic activity">
    <reaction evidence="1">
        <text>tRNA(Ala) + L-alanine + ATP = L-alanyl-tRNA(Ala) + AMP + diphosphate</text>
        <dbReference type="Rhea" id="RHEA:12540"/>
        <dbReference type="Rhea" id="RHEA-COMP:9657"/>
        <dbReference type="Rhea" id="RHEA-COMP:9923"/>
        <dbReference type="ChEBI" id="CHEBI:30616"/>
        <dbReference type="ChEBI" id="CHEBI:33019"/>
        <dbReference type="ChEBI" id="CHEBI:57972"/>
        <dbReference type="ChEBI" id="CHEBI:78442"/>
        <dbReference type="ChEBI" id="CHEBI:78497"/>
        <dbReference type="ChEBI" id="CHEBI:456215"/>
        <dbReference type="EC" id="6.1.1.7"/>
    </reaction>
</comment>
<comment type="cofactor">
    <cofactor evidence="1">
        <name>Zn(2+)</name>
        <dbReference type="ChEBI" id="CHEBI:29105"/>
    </cofactor>
    <text evidence="1">Binds 1 zinc ion per subunit.</text>
</comment>
<comment type="subcellular location">
    <subcellularLocation>
        <location evidence="1">Cytoplasm</location>
    </subcellularLocation>
</comment>
<comment type="domain">
    <text evidence="1">Consists of three domains; the N-terminal catalytic domain, the editing domain and the C-terminal C-Ala domain. The editing domain removes incorrectly charged amino acids, while the C-Ala domain, along with tRNA(Ala), serves as a bridge to cooperatively bring together the editing and aminoacylation centers thus stimulating deacylation of misacylated tRNAs.</text>
</comment>
<comment type="similarity">
    <text evidence="1">Belongs to the class-II aminoacyl-tRNA synthetase family.</text>
</comment>
<gene>
    <name evidence="1" type="primary">alaS</name>
    <name type="ordered locus">HS_1120</name>
</gene>
<dbReference type="EC" id="6.1.1.7" evidence="1"/>
<dbReference type="EMBL" id="CP000436">
    <property type="protein sequence ID" value="ABI25395.1"/>
    <property type="molecule type" value="Genomic_DNA"/>
</dbReference>
<dbReference type="SMR" id="Q0I426"/>
<dbReference type="KEGG" id="hso:HS_1120"/>
<dbReference type="eggNOG" id="COG0013">
    <property type="taxonomic scope" value="Bacteria"/>
</dbReference>
<dbReference type="HOGENOM" id="CLU_004485_1_1_6"/>
<dbReference type="GO" id="GO:0005829">
    <property type="term" value="C:cytosol"/>
    <property type="evidence" value="ECO:0007669"/>
    <property type="project" value="TreeGrafter"/>
</dbReference>
<dbReference type="GO" id="GO:0004813">
    <property type="term" value="F:alanine-tRNA ligase activity"/>
    <property type="evidence" value="ECO:0007669"/>
    <property type="project" value="UniProtKB-UniRule"/>
</dbReference>
<dbReference type="GO" id="GO:0002161">
    <property type="term" value="F:aminoacyl-tRNA deacylase activity"/>
    <property type="evidence" value="ECO:0007669"/>
    <property type="project" value="TreeGrafter"/>
</dbReference>
<dbReference type="GO" id="GO:0005524">
    <property type="term" value="F:ATP binding"/>
    <property type="evidence" value="ECO:0007669"/>
    <property type="project" value="UniProtKB-UniRule"/>
</dbReference>
<dbReference type="GO" id="GO:0000049">
    <property type="term" value="F:tRNA binding"/>
    <property type="evidence" value="ECO:0007669"/>
    <property type="project" value="UniProtKB-KW"/>
</dbReference>
<dbReference type="GO" id="GO:0008270">
    <property type="term" value="F:zinc ion binding"/>
    <property type="evidence" value="ECO:0007669"/>
    <property type="project" value="UniProtKB-UniRule"/>
</dbReference>
<dbReference type="GO" id="GO:0006419">
    <property type="term" value="P:alanyl-tRNA aminoacylation"/>
    <property type="evidence" value="ECO:0007669"/>
    <property type="project" value="UniProtKB-UniRule"/>
</dbReference>
<dbReference type="GO" id="GO:0045892">
    <property type="term" value="P:negative regulation of DNA-templated transcription"/>
    <property type="evidence" value="ECO:0007669"/>
    <property type="project" value="TreeGrafter"/>
</dbReference>
<dbReference type="CDD" id="cd00673">
    <property type="entry name" value="AlaRS_core"/>
    <property type="match status" value="1"/>
</dbReference>
<dbReference type="FunFam" id="2.40.30.130:FF:000001">
    <property type="entry name" value="Alanine--tRNA ligase"/>
    <property type="match status" value="1"/>
</dbReference>
<dbReference type="FunFam" id="3.10.310.40:FF:000001">
    <property type="entry name" value="Alanine--tRNA ligase"/>
    <property type="match status" value="1"/>
</dbReference>
<dbReference type="FunFam" id="3.30.54.20:FF:000001">
    <property type="entry name" value="Alanine--tRNA ligase"/>
    <property type="match status" value="1"/>
</dbReference>
<dbReference type="FunFam" id="3.30.930.10:FF:000004">
    <property type="entry name" value="Alanine--tRNA ligase"/>
    <property type="match status" value="1"/>
</dbReference>
<dbReference type="FunFam" id="3.30.980.10:FF:000004">
    <property type="entry name" value="Alanine--tRNA ligase, cytoplasmic"/>
    <property type="match status" value="1"/>
</dbReference>
<dbReference type="Gene3D" id="2.40.30.130">
    <property type="match status" value="1"/>
</dbReference>
<dbReference type="Gene3D" id="3.10.310.40">
    <property type="match status" value="1"/>
</dbReference>
<dbReference type="Gene3D" id="3.30.54.20">
    <property type="match status" value="1"/>
</dbReference>
<dbReference type="Gene3D" id="6.10.250.550">
    <property type="match status" value="1"/>
</dbReference>
<dbReference type="Gene3D" id="3.30.930.10">
    <property type="entry name" value="Bira Bifunctional Protein, Domain 2"/>
    <property type="match status" value="1"/>
</dbReference>
<dbReference type="Gene3D" id="3.30.980.10">
    <property type="entry name" value="Threonyl-trna Synthetase, Chain A, domain 2"/>
    <property type="match status" value="1"/>
</dbReference>
<dbReference type="HAMAP" id="MF_00036_B">
    <property type="entry name" value="Ala_tRNA_synth_B"/>
    <property type="match status" value="1"/>
</dbReference>
<dbReference type="InterPro" id="IPR045864">
    <property type="entry name" value="aa-tRNA-synth_II/BPL/LPL"/>
</dbReference>
<dbReference type="InterPro" id="IPR002318">
    <property type="entry name" value="Ala-tRNA-lgiase_IIc"/>
</dbReference>
<dbReference type="InterPro" id="IPR018162">
    <property type="entry name" value="Ala-tRNA-ligase_IIc_anticod-bd"/>
</dbReference>
<dbReference type="InterPro" id="IPR018165">
    <property type="entry name" value="Ala-tRNA-synth_IIc_core"/>
</dbReference>
<dbReference type="InterPro" id="IPR018164">
    <property type="entry name" value="Ala-tRNA-synth_IIc_N"/>
</dbReference>
<dbReference type="InterPro" id="IPR050058">
    <property type="entry name" value="Ala-tRNA_ligase"/>
</dbReference>
<dbReference type="InterPro" id="IPR023033">
    <property type="entry name" value="Ala_tRNA_ligase_euk/bac"/>
</dbReference>
<dbReference type="InterPro" id="IPR003156">
    <property type="entry name" value="DHHA1_dom"/>
</dbReference>
<dbReference type="InterPro" id="IPR018163">
    <property type="entry name" value="Thr/Ala-tRNA-synth_IIc_edit"/>
</dbReference>
<dbReference type="InterPro" id="IPR009000">
    <property type="entry name" value="Transl_B-barrel_sf"/>
</dbReference>
<dbReference type="InterPro" id="IPR012947">
    <property type="entry name" value="tRNA_SAD"/>
</dbReference>
<dbReference type="NCBIfam" id="TIGR00344">
    <property type="entry name" value="alaS"/>
    <property type="match status" value="1"/>
</dbReference>
<dbReference type="PANTHER" id="PTHR11777:SF9">
    <property type="entry name" value="ALANINE--TRNA LIGASE, CYTOPLASMIC"/>
    <property type="match status" value="1"/>
</dbReference>
<dbReference type="PANTHER" id="PTHR11777">
    <property type="entry name" value="ALANYL-TRNA SYNTHETASE"/>
    <property type="match status" value="1"/>
</dbReference>
<dbReference type="Pfam" id="PF02272">
    <property type="entry name" value="DHHA1"/>
    <property type="match status" value="1"/>
</dbReference>
<dbReference type="Pfam" id="PF01411">
    <property type="entry name" value="tRNA-synt_2c"/>
    <property type="match status" value="1"/>
</dbReference>
<dbReference type="Pfam" id="PF07973">
    <property type="entry name" value="tRNA_SAD"/>
    <property type="match status" value="1"/>
</dbReference>
<dbReference type="PRINTS" id="PR00980">
    <property type="entry name" value="TRNASYNTHALA"/>
</dbReference>
<dbReference type="SMART" id="SM00863">
    <property type="entry name" value="tRNA_SAD"/>
    <property type="match status" value="1"/>
</dbReference>
<dbReference type="SUPFAM" id="SSF55681">
    <property type="entry name" value="Class II aaRS and biotin synthetases"/>
    <property type="match status" value="1"/>
</dbReference>
<dbReference type="SUPFAM" id="SSF101353">
    <property type="entry name" value="Putative anticodon-binding domain of alanyl-tRNA synthetase (AlaRS)"/>
    <property type="match status" value="1"/>
</dbReference>
<dbReference type="SUPFAM" id="SSF55186">
    <property type="entry name" value="ThrRS/AlaRS common domain"/>
    <property type="match status" value="1"/>
</dbReference>
<dbReference type="SUPFAM" id="SSF50447">
    <property type="entry name" value="Translation proteins"/>
    <property type="match status" value="1"/>
</dbReference>
<dbReference type="PROSITE" id="PS50860">
    <property type="entry name" value="AA_TRNA_LIGASE_II_ALA"/>
    <property type="match status" value="1"/>
</dbReference>
<accession>Q0I426</accession>
<name>SYA_HISS1</name>
<evidence type="ECO:0000255" key="1">
    <source>
        <dbReference type="HAMAP-Rule" id="MF_00036"/>
    </source>
</evidence>
<sequence>MKTTAEIRQAFLDFFHSKGHQIVDSSSLVPENDPTLLFTNAGMNQFKDVFLGLDTRSYTRATTAQRCVRAGGKHNDLENVGYTARHHTFFEMLGNFSFGDYFKQDAIKFAWEFLTSPEWLGLPEEKLYVTVYETDDEAYGIWHKGVGVPENHIIRIGDNKGAPYASDNFWAMGDTGPCGPCTEIFYDHGEHVWGGLPGSEEEDGDRYIEVWNIVFMQFNRLADGTMEKLPKPSVDTGMGLERISAVIQHVNSNYDIDIFQKLIAKVAELTGEKDLTNKSLRVIADHIRSCAYLIADGVIPSNEGRGYVLRRIIRRAVRHGHLLGAKDTFFYKLVPVLIDVMATAGKDVKAKQANVEKLLRLEEEQFARTLERGLALLDEALINVKDGVLSGEVAFKLYDTYGFPLDLTADVCRERNIRIDEEGFEREMEVQRLRAQAASRFGVDYNNVIRVEGTTTFEGYTEAETQAKVTALFYEGKSVESISAGQSAVVILDDTPFYAESGGQIGDRGCLIATNMRFDVKDTQKYGQVFGHIGTLIQGTLNVGQTINAVVDTEHRTKTSLNHSATHLLHAALRQVLGTHVAQKGSLVSDTILRFDFAQPEAIRQEQLFEIECLVNQHIRANHLVVTEVMPIDEAKAKGAMALFGEKYGDVVRVVKMGEFSIELCGGIHVKRTGEIGLFKIVSESAIAAGVRRVEAVTGEAAINWLQQQQQILMQSADLLKSDANSLVEKIQQLQDKAKKTEKELQALKEKSAMKAGSDIAKSAVEINGVSVIVQQLENMDVKSLRVIVDDLKNQLGSAVIAFVTKTEDKVNLVVGVTTDLTSKVKAGELVNLMAQQVGGKGGGRPDMAMAGGSQPENISKALTVCNEWLHKNL</sequence>
<proteinExistence type="inferred from homology"/>
<keyword id="KW-0030">Aminoacyl-tRNA synthetase</keyword>
<keyword id="KW-0067">ATP-binding</keyword>
<keyword id="KW-0963">Cytoplasm</keyword>
<keyword id="KW-0436">Ligase</keyword>
<keyword id="KW-0479">Metal-binding</keyword>
<keyword id="KW-0547">Nucleotide-binding</keyword>
<keyword id="KW-0648">Protein biosynthesis</keyword>
<keyword id="KW-0694">RNA-binding</keyword>
<keyword id="KW-0820">tRNA-binding</keyword>
<keyword id="KW-0862">Zinc</keyword>
<reference key="1">
    <citation type="journal article" date="2007" name="J. Bacteriol.">
        <title>Complete genome sequence of Haemophilus somnus (Histophilus somni) strain 129Pt and comparison to Haemophilus ducreyi 35000HP and Haemophilus influenzae Rd.</title>
        <authorList>
            <person name="Challacombe J.F."/>
            <person name="Duncan A.J."/>
            <person name="Brettin T.S."/>
            <person name="Bruce D."/>
            <person name="Chertkov O."/>
            <person name="Detter J.C."/>
            <person name="Han C.S."/>
            <person name="Misra M."/>
            <person name="Richardson P."/>
            <person name="Tapia R."/>
            <person name="Thayer N."/>
            <person name="Xie G."/>
            <person name="Inzana T.J."/>
        </authorList>
    </citation>
    <scope>NUCLEOTIDE SEQUENCE [LARGE SCALE GENOMIC DNA]</scope>
    <source>
        <strain>129Pt</strain>
    </source>
</reference>